<proteinExistence type="inferred from homology"/>
<feature type="chain" id="PRO_0000214383" description="UPF0114 protein in repA1-repA2 intergenic region">
    <location>
        <begin position="1"/>
        <end position="167"/>
    </location>
</feature>
<feature type="transmembrane region" description="Helical" evidence="1">
    <location>
        <begin position="15"/>
        <end position="35"/>
    </location>
</feature>
<feature type="transmembrane region" description="Helical" evidence="1">
    <location>
        <begin position="53"/>
        <end position="73"/>
    </location>
</feature>
<feature type="transmembrane region" description="Helical" evidence="1">
    <location>
        <begin position="136"/>
        <end position="156"/>
    </location>
</feature>
<feature type="sequence conflict" description="In Ref. 2; CAA07294." evidence="2" ref="2">
    <original>R</original>
    <variation>H</variation>
    <location>
        <position position="143"/>
    </location>
</feature>
<gene>
    <name type="ordered locus">BUsg_PL2</name>
</gene>
<accession>O85061</accession>
<accession>Q9ZEZ7</accession>
<sequence length="167" mass="18938">MEKIIEKSIYASRWLMFPVYVGLSFGFILLTLKFFQQIIFIIPDILAMSESGLVLAVLSLIDIALVGGLLVMVMFSGYENFISKMDIQDNEKRLGWMGTMDVNSIKNKVASSIVAISSVHLLRLFMEAERILDNKIMLCVIIRLTFVLSAFGMAYIDKMSKKKDNLH</sequence>
<protein>
    <recommendedName>
        <fullName>UPF0114 protein in repA1-repA2 intergenic region</fullName>
    </recommendedName>
</protein>
<organism>
    <name type="scientific">Buchnera aphidicola subsp. Schizaphis graminum (strain Sg)</name>
    <dbReference type="NCBI Taxonomy" id="198804"/>
    <lineage>
        <taxon>Bacteria</taxon>
        <taxon>Pseudomonadati</taxon>
        <taxon>Pseudomonadota</taxon>
        <taxon>Gammaproteobacteria</taxon>
        <taxon>Enterobacterales</taxon>
        <taxon>Erwiniaceae</taxon>
        <taxon>Buchnera</taxon>
    </lineage>
</organism>
<evidence type="ECO:0000255" key="1"/>
<evidence type="ECO:0000305" key="2"/>
<name>YREP_BUCAP</name>
<reference key="1">
    <citation type="journal article" date="1999" name="J. Mol. Evol.">
        <title>Genetic characterization of plasmids containing genes encoding enzymes of leucine biosynthesis in endosymbionts (Buchnera) of aphids.</title>
        <authorList>
            <person name="Baumann L."/>
            <person name="Baumann P."/>
            <person name="Moran N.A."/>
            <person name="Sandstroem J.P."/>
            <person name="Thao M.L."/>
        </authorList>
    </citation>
    <scope>NUCLEOTIDE SEQUENCE [LARGE SCALE GENOMIC DNA]</scope>
    <source>
        <strain>Sg</strain>
    </source>
</reference>
<reference key="2">
    <citation type="journal article" date="1998" name="FEMS Microbiol. Lett.">
        <title>Structure and evolution of the leucine plasmids carried by the endosymbiont (Buchnera aphidicola) from aphids of the family Aphididae.</title>
        <authorList>
            <person name="Silva F.J."/>
            <person name="van Ham R.C.H.J."/>
            <person name="Sabater B."/>
            <person name="Latorre A."/>
        </authorList>
    </citation>
    <scope>NUCLEOTIDE SEQUENCE [GENOMIC DNA] OF 82-167</scope>
</reference>
<dbReference type="EMBL" id="AF041836">
    <property type="protein sequence ID" value="AAD12591.1"/>
    <property type="molecule type" value="Genomic_DNA"/>
</dbReference>
<dbReference type="EMBL" id="AJ006876">
    <property type="protein sequence ID" value="CAA07294.1"/>
    <property type="molecule type" value="Genomic_DNA"/>
</dbReference>
<dbReference type="RefSeq" id="NP_047178.1">
    <property type="nucleotide sequence ID" value="NC_001910.1"/>
</dbReference>
<dbReference type="Proteomes" id="UP000000416">
    <property type="component" value="Plasmid pLeu-Sg"/>
</dbReference>
<dbReference type="GO" id="GO:0005886">
    <property type="term" value="C:plasma membrane"/>
    <property type="evidence" value="ECO:0007669"/>
    <property type="project" value="UniProtKB-SubCell"/>
</dbReference>
<dbReference type="HAMAP" id="MF_00143">
    <property type="entry name" value="UPF0114"/>
    <property type="match status" value="1"/>
</dbReference>
<dbReference type="InterPro" id="IPR005134">
    <property type="entry name" value="UPF0114"/>
</dbReference>
<dbReference type="InterPro" id="IPR020761">
    <property type="entry name" value="UPF0114_bac"/>
</dbReference>
<dbReference type="NCBIfam" id="TIGR00645">
    <property type="entry name" value="HI0507"/>
    <property type="match status" value="1"/>
</dbReference>
<dbReference type="PANTHER" id="PTHR38596">
    <property type="entry name" value="UPF0114 PROTEIN YQHA"/>
    <property type="match status" value="1"/>
</dbReference>
<dbReference type="PANTHER" id="PTHR38596:SF1">
    <property type="entry name" value="UPF0114 PROTEIN YQHA"/>
    <property type="match status" value="1"/>
</dbReference>
<dbReference type="Pfam" id="PF03350">
    <property type="entry name" value="UPF0114"/>
    <property type="match status" value="1"/>
</dbReference>
<comment type="subcellular location">
    <subcellularLocation>
        <location evidence="2">Cell membrane</location>
        <topology evidence="2">Multi-pass membrane protein</topology>
    </subcellularLocation>
</comment>
<comment type="similarity">
    <text evidence="2">Belongs to the UPF0114 family.</text>
</comment>
<geneLocation type="plasmid">
    <name>pLeu-Sg</name>
    <name>pBSg1</name>
</geneLocation>
<keyword id="KW-1003">Cell membrane</keyword>
<keyword id="KW-0472">Membrane</keyword>
<keyword id="KW-0614">Plasmid</keyword>
<keyword id="KW-0812">Transmembrane</keyword>
<keyword id="KW-1133">Transmembrane helix</keyword>